<accession>Q1WRH7</accession>
<reference key="1">
    <citation type="journal article" date="2006" name="Proc. Natl. Acad. Sci. U.S.A.">
        <title>Multireplicon genome architecture of Lactobacillus salivarius.</title>
        <authorList>
            <person name="Claesson M.J."/>
            <person name="Li Y."/>
            <person name="Leahy S."/>
            <person name="Canchaya C."/>
            <person name="van Pijkeren J.P."/>
            <person name="Cerdeno-Tarraga A.M."/>
            <person name="Parkhill J."/>
            <person name="Flynn S."/>
            <person name="O'Sullivan G.C."/>
            <person name="Collins J.K."/>
            <person name="Higgins D."/>
            <person name="Shanahan F."/>
            <person name="Fitzgerald G.F."/>
            <person name="van Sinderen D."/>
            <person name="O'Toole P.W."/>
        </authorList>
    </citation>
    <scope>NUCLEOTIDE SEQUENCE [LARGE SCALE GENOMIC DNA]</scope>
    <source>
        <strain>UCC118</strain>
    </source>
</reference>
<sequence>MKIIISPAKKMVEDTDSFDISKLPIFKDKAEVLLTWLKSKNYDELKNIWKCNDKIAKLNYDRVQDMNLDENLTPAVMAYSGIQYQAMGPQVFTQEALQRAAKDLYIISGFYGILGAMDGITPYRLEMQAKVDINDQHTLYQFWGDSIYQELYRDNELVVNLASKEYSKAIERYLKPQDKFIICSFKKEKNGKYVQQATAAKQARGDMVRYILENNIKEIDEIKNFSVNGYQYEPQFSTDTELVFIKN</sequence>
<name>Y1719_LIGS1</name>
<comment type="similarity">
    <text evidence="1">Belongs to the UPF0246 family.</text>
</comment>
<dbReference type="EMBL" id="CP000233">
    <property type="protein sequence ID" value="ABE00521.1"/>
    <property type="molecule type" value="Genomic_DNA"/>
</dbReference>
<dbReference type="RefSeq" id="WP_011476537.1">
    <property type="nucleotide sequence ID" value="NC_007929.1"/>
</dbReference>
<dbReference type="RefSeq" id="YP_536604.1">
    <property type="nucleotide sequence ID" value="NC_007929.1"/>
</dbReference>
<dbReference type="SMR" id="Q1WRH7"/>
<dbReference type="STRING" id="362948.LSL_1719"/>
<dbReference type="KEGG" id="lsl:LSL_1719"/>
<dbReference type="PATRIC" id="fig|362948.14.peg.1816"/>
<dbReference type="HOGENOM" id="CLU_061989_1_0_9"/>
<dbReference type="OrthoDB" id="9777133at2"/>
<dbReference type="Proteomes" id="UP000006559">
    <property type="component" value="Chromosome"/>
</dbReference>
<dbReference type="GO" id="GO:0005829">
    <property type="term" value="C:cytosol"/>
    <property type="evidence" value="ECO:0007669"/>
    <property type="project" value="TreeGrafter"/>
</dbReference>
<dbReference type="GO" id="GO:0033194">
    <property type="term" value="P:response to hydroperoxide"/>
    <property type="evidence" value="ECO:0007669"/>
    <property type="project" value="TreeGrafter"/>
</dbReference>
<dbReference type="HAMAP" id="MF_00652">
    <property type="entry name" value="UPF0246"/>
    <property type="match status" value="1"/>
</dbReference>
<dbReference type="InterPro" id="IPR005583">
    <property type="entry name" value="YaaA"/>
</dbReference>
<dbReference type="NCBIfam" id="NF002543">
    <property type="entry name" value="PRK02101.1-4"/>
    <property type="match status" value="1"/>
</dbReference>
<dbReference type="PANTHER" id="PTHR30283:SF4">
    <property type="entry name" value="PEROXIDE STRESS RESISTANCE PROTEIN YAAA"/>
    <property type="match status" value="1"/>
</dbReference>
<dbReference type="PANTHER" id="PTHR30283">
    <property type="entry name" value="PEROXIDE STRESS RESPONSE PROTEIN YAAA"/>
    <property type="match status" value="1"/>
</dbReference>
<dbReference type="Pfam" id="PF03883">
    <property type="entry name" value="H2O2_YaaD"/>
    <property type="match status" value="1"/>
</dbReference>
<keyword id="KW-1185">Reference proteome</keyword>
<organism>
    <name type="scientific">Ligilactobacillus salivarius (strain UCC118)</name>
    <name type="common">Lactobacillus salivarius</name>
    <dbReference type="NCBI Taxonomy" id="362948"/>
    <lineage>
        <taxon>Bacteria</taxon>
        <taxon>Bacillati</taxon>
        <taxon>Bacillota</taxon>
        <taxon>Bacilli</taxon>
        <taxon>Lactobacillales</taxon>
        <taxon>Lactobacillaceae</taxon>
        <taxon>Ligilactobacillus</taxon>
    </lineage>
</organism>
<feature type="chain" id="PRO_0000262029" description="UPF0246 protein LSL_1719">
    <location>
        <begin position="1"/>
        <end position="247"/>
    </location>
</feature>
<evidence type="ECO:0000255" key="1">
    <source>
        <dbReference type="HAMAP-Rule" id="MF_00652"/>
    </source>
</evidence>
<proteinExistence type="inferred from homology"/>
<protein>
    <recommendedName>
        <fullName evidence="1">UPF0246 protein LSL_1719</fullName>
    </recommendedName>
</protein>
<gene>
    <name type="ordered locus">LSL_1719</name>
</gene>